<proteinExistence type="inferred from homology"/>
<sequence length="270" mass="29476">MTSLKQQPPHLLRGIPLAVRKLKKAFGAREVLKDIDLHIPAGQFVAIVGRSGCGKSTLLRLLAGLDKPTQGQLLAGSAPLDDAREDTRLMFQEARLLPWKKIIDNVGLGLSGDWRAQALEALEAVGLAERANEWPAALSGGQKQRVALARALIHKPRLLLLDEPLGALDALTRIEMQQLIEKLWGQYGFTVLLVTHDVSEAVAIADRVILIEEGQIGLDLLVDLPRPRVRGSHRLAALEAEVLNRVLALPGSPPDPEPFSPLPTQLRWAN</sequence>
<protein>
    <recommendedName>
        <fullName evidence="1">Aliphatic sulfonates import ATP-binding protein SsuB 3</fullName>
        <ecNumber evidence="1">7.6.2.14</ecNumber>
    </recommendedName>
</protein>
<organism>
    <name type="scientific">Pseudomonas syringae pv. syringae (strain B728a)</name>
    <dbReference type="NCBI Taxonomy" id="205918"/>
    <lineage>
        <taxon>Bacteria</taxon>
        <taxon>Pseudomonadati</taxon>
        <taxon>Pseudomonadota</taxon>
        <taxon>Gammaproteobacteria</taxon>
        <taxon>Pseudomonadales</taxon>
        <taxon>Pseudomonadaceae</taxon>
        <taxon>Pseudomonas</taxon>
        <taxon>Pseudomonas syringae</taxon>
    </lineage>
</organism>
<feature type="chain" id="PRO_0000279942" description="Aliphatic sulfonates import ATP-binding protein SsuB 3">
    <location>
        <begin position="1"/>
        <end position="270"/>
    </location>
</feature>
<feature type="domain" description="ABC transporter" evidence="1">
    <location>
        <begin position="17"/>
        <end position="238"/>
    </location>
</feature>
<feature type="binding site" evidence="1">
    <location>
        <begin position="49"/>
        <end position="56"/>
    </location>
    <ligand>
        <name>ATP</name>
        <dbReference type="ChEBI" id="CHEBI:30616"/>
    </ligand>
</feature>
<reference key="1">
    <citation type="journal article" date="2005" name="Proc. Natl. Acad. Sci. U.S.A.">
        <title>Comparison of the complete genome sequences of Pseudomonas syringae pv. syringae B728a and pv. tomato DC3000.</title>
        <authorList>
            <person name="Feil H."/>
            <person name="Feil W.S."/>
            <person name="Chain P."/>
            <person name="Larimer F."/>
            <person name="Dibartolo G."/>
            <person name="Copeland A."/>
            <person name="Lykidis A."/>
            <person name="Trong S."/>
            <person name="Nolan M."/>
            <person name="Goltsman E."/>
            <person name="Thiel J."/>
            <person name="Malfatti S."/>
            <person name="Loper J.E."/>
            <person name="Lapidus A."/>
            <person name="Detter J.C."/>
            <person name="Land M."/>
            <person name="Richardson P.M."/>
            <person name="Kyrpides N.C."/>
            <person name="Ivanova N."/>
            <person name="Lindow S.E."/>
        </authorList>
    </citation>
    <scope>NUCLEOTIDE SEQUENCE [LARGE SCALE GENOMIC DNA]</scope>
    <source>
        <strain>B728a</strain>
    </source>
</reference>
<accession>Q4ZLS1</accession>
<gene>
    <name evidence="1" type="primary">ssuB3</name>
    <name type="ordered locus">Psyr_4874</name>
</gene>
<keyword id="KW-0067">ATP-binding</keyword>
<keyword id="KW-0997">Cell inner membrane</keyword>
<keyword id="KW-1003">Cell membrane</keyword>
<keyword id="KW-0472">Membrane</keyword>
<keyword id="KW-0547">Nucleotide-binding</keyword>
<keyword id="KW-1278">Translocase</keyword>
<keyword id="KW-0813">Transport</keyword>
<dbReference type="EC" id="7.6.2.14" evidence="1"/>
<dbReference type="EMBL" id="CP000075">
    <property type="protein sequence ID" value="AAY39901.1"/>
    <property type="molecule type" value="Genomic_DNA"/>
</dbReference>
<dbReference type="RefSeq" id="YP_237939.1">
    <property type="nucleotide sequence ID" value="NC_007005.1"/>
</dbReference>
<dbReference type="SMR" id="Q4ZLS1"/>
<dbReference type="STRING" id="205918.Psyr_4874"/>
<dbReference type="KEGG" id="psb:Psyr_4874"/>
<dbReference type="PATRIC" id="fig|205918.7.peg.5040"/>
<dbReference type="eggNOG" id="COG1116">
    <property type="taxonomic scope" value="Bacteria"/>
</dbReference>
<dbReference type="HOGENOM" id="CLU_000604_1_22_6"/>
<dbReference type="OrthoDB" id="9802264at2"/>
<dbReference type="Proteomes" id="UP000000426">
    <property type="component" value="Chromosome"/>
</dbReference>
<dbReference type="GO" id="GO:0005886">
    <property type="term" value="C:plasma membrane"/>
    <property type="evidence" value="ECO:0007669"/>
    <property type="project" value="UniProtKB-SubCell"/>
</dbReference>
<dbReference type="GO" id="GO:0005524">
    <property type="term" value="F:ATP binding"/>
    <property type="evidence" value="ECO:0007669"/>
    <property type="project" value="UniProtKB-KW"/>
</dbReference>
<dbReference type="GO" id="GO:0016887">
    <property type="term" value="F:ATP hydrolysis activity"/>
    <property type="evidence" value="ECO:0007669"/>
    <property type="project" value="InterPro"/>
</dbReference>
<dbReference type="CDD" id="cd03293">
    <property type="entry name" value="ABC_NrtD_SsuB_transporters"/>
    <property type="match status" value="1"/>
</dbReference>
<dbReference type="FunFam" id="3.40.50.300:FF:000653">
    <property type="entry name" value="Aliphatic sulfonates import ATP-binding protein SsuB"/>
    <property type="match status" value="1"/>
</dbReference>
<dbReference type="Gene3D" id="3.40.50.300">
    <property type="entry name" value="P-loop containing nucleotide triphosphate hydrolases"/>
    <property type="match status" value="1"/>
</dbReference>
<dbReference type="InterPro" id="IPR003593">
    <property type="entry name" value="AAA+_ATPase"/>
</dbReference>
<dbReference type="InterPro" id="IPR003439">
    <property type="entry name" value="ABC_transporter-like_ATP-bd"/>
</dbReference>
<dbReference type="InterPro" id="IPR017871">
    <property type="entry name" value="ABC_transporter-like_CS"/>
</dbReference>
<dbReference type="InterPro" id="IPR050166">
    <property type="entry name" value="ABC_transporter_ATP-bind"/>
</dbReference>
<dbReference type="InterPro" id="IPR027417">
    <property type="entry name" value="P-loop_NTPase"/>
</dbReference>
<dbReference type="NCBIfam" id="NF008420">
    <property type="entry name" value="PRK11247.1"/>
    <property type="match status" value="1"/>
</dbReference>
<dbReference type="PANTHER" id="PTHR42788:SF17">
    <property type="entry name" value="ALIPHATIC SULFONATES IMPORT ATP-BINDING PROTEIN SSUB"/>
    <property type="match status" value="1"/>
</dbReference>
<dbReference type="PANTHER" id="PTHR42788">
    <property type="entry name" value="TAURINE IMPORT ATP-BINDING PROTEIN-RELATED"/>
    <property type="match status" value="1"/>
</dbReference>
<dbReference type="Pfam" id="PF00005">
    <property type="entry name" value="ABC_tran"/>
    <property type="match status" value="1"/>
</dbReference>
<dbReference type="SMART" id="SM00382">
    <property type="entry name" value="AAA"/>
    <property type="match status" value="1"/>
</dbReference>
<dbReference type="SUPFAM" id="SSF52540">
    <property type="entry name" value="P-loop containing nucleoside triphosphate hydrolases"/>
    <property type="match status" value="1"/>
</dbReference>
<dbReference type="PROSITE" id="PS00211">
    <property type="entry name" value="ABC_TRANSPORTER_1"/>
    <property type="match status" value="1"/>
</dbReference>
<dbReference type="PROSITE" id="PS50893">
    <property type="entry name" value="ABC_TRANSPORTER_2"/>
    <property type="match status" value="1"/>
</dbReference>
<dbReference type="PROSITE" id="PS51291">
    <property type="entry name" value="SSUB"/>
    <property type="match status" value="1"/>
</dbReference>
<name>SSUB3_PSEU2</name>
<evidence type="ECO:0000255" key="1">
    <source>
        <dbReference type="HAMAP-Rule" id="MF_01724"/>
    </source>
</evidence>
<comment type="function">
    <text evidence="1">Part of the ABC transporter complex SsuABC involved in aliphatic sulfonates import. Responsible for energy coupling to the transport system.</text>
</comment>
<comment type="catalytic activity">
    <reaction evidence="1">
        <text>ATP + H2O + aliphatic sulfonate-[sulfonate-binding protein]Side 1 = ADP + phosphate + aliphatic sulfonateSide 2 + [sulfonate-binding protein]Side 1.</text>
        <dbReference type="EC" id="7.6.2.14"/>
    </reaction>
</comment>
<comment type="subunit">
    <text evidence="1">The complex is composed of two ATP-binding proteins (SsuB), two transmembrane proteins (SsuC) and a solute-binding protein (SsuA).</text>
</comment>
<comment type="subcellular location">
    <subcellularLocation>
        <location evidence="1">Cell inner membrane</location>
        <topology evidence="1">Peripheral membrane protein</topology>
    </subcellularLocation>
</comment>
<comment type="similarity">
    <text evidence="1">Belongs to the ABC transporter superfamily. Aliphatic sulfonates importer (TC 3.A.1.17.2) family.</text>
</comment>